<protein>
    <recommendedName>
        <fullName evidence="10">Dol-P-Glc:Glc(2)Man(9)GlcNAc(2)-PP-Dol alpha-1,2-glucosyltransferase</fullName>
        <ecNumber evidence="6">2.4.1.256</ecNumber>
    </recommendedName>
    <alternativeName>
        <fullName>Alpha-1,2-glucosyltransferase ALG10-A</fullName>
    </alternativeName>
    <alternativeName>
        <fullName>Alpha-2-glucosyltransferase ALG10-B</fullName>
    </alternativeName>
    <alternativeName>
        <fullName evidence="11">Asparagine-linked glycosylation protein 10 homolog B</fullName>
    </alternativeName>
    <alternativeName>
        <fullName evidence="8">Potassium channel regulator 1</fullName>
    </alternativeName>
</protein>
<comment type="function">
    <text evidence="6">Dol-P-Glc:Glc(2)Man(9)GlcNAc(2)-PP-Dol alpha-1,2-glucosyltransferase that operates in the biosynthetic pathway of dolichol-linked oligosaccharides, the glycan precursors employed in protein asparagine (N)-glycosylation. The assembly of dolichol-linked oligosaccharides begins on the cytosolic side of the endoplasmic reticulum membrane and finishes in its lumen. The sequential addition of sugars to dolichol pyrophosphate produces dolichol-linked oligosaccharides containing fourteen sugars, including two GlcNAcs, nine mannoses and three glucoses. Once assembled, the oligosaccharide is transferred from the lipid to nascent proteins by oligosaccharyltransferases. In the lumen of the endoplasmic reticulum, adds the third and last glucose residue from dolichyl phosphate glucose (Dol-P-Glc) onto the lipid-linked oligosaccharide intermediate Glc(2)Man(9)GlcNAc(2)-PP-Dol to produce Glc(3)Man(9)GlcNAc(2)-PP-Dol.</text>
</comment>
<comment type="catalytic activity">
    <reaction evidence="6">
        <text>an alpha-D-Glc-(1-&gt;3)-alpha-D-Glc-(1-&gt;3)-alpha-D-Man-(1-&gt;2)-alpha-D-Man-(1-&gt;2)-alpha-D-Man-(1-&gt;3)-[alpha-D-Man-(1-&gt;2)-alpha-D-Man-(1-&gt;3)-[alpha-D-Man-(1-&gt;2)-alpha-D-Man-(1-&gt;6)]-alpha-D-Man-(1-&gt;6)]-beta-D-Man-(1-&gt;4)-beta-D-GlcNAc-(1-&gt;4)-alpha-D-GlcNAc-diphospho-di-trans,poly-cis-dolichol + a di-trans,poly-cis-dolichyl beta-D-glucosyl phosphate = a alpha-D-Glc-(1-&gt;2)-alpha-D-Glc-(1-&gt;3)-alpha-D-Glc-(1-&gt;3)-alpha-D-Man-(1-&gt;2)-alpha-D-Man-(1-&gt;2)-alpha-D-Man-(1-&gt;3)-[alpha-D-Man-(1-&gt;2)-alpha-D-Man-(1-&gt;3)-[alpha-D-Man-(1-&gt;2)-alpha-D-Man-(1-&gt;6)]-alpha-D-Man-(1-&gt;6)]-beta-D-Man-(1-&gt;4)-beta-D-GlcNAc-(1-&gt;4)-alpha-D-GlcNAc-diphospho-di-trans,poly-cis-dolichol + a di-trans,poly-cis-dolichyl phosphate + H(+)</text>
        <dbReference type="Rhea" id="RHEA:29543"/>
        <dbReference type="Rhea" id="RHEA-COMP:19498"/>
        <dbReference type="Rhea" id="RHEA-COMP:19502"/>
        <dbReference type="Rhea" id="RHEA-COMP:19512"/>
        <dbReference type="Rhea" id="RHEA-COMP:19522"/>
        <dbReference type="ChEBI" id="CHEBI:15378"/>
        <dbReference type="ChEBI" id="CHEBI:57525"/>
        <dbReference type="ChEBI" id="CHEBI:57683"/>
        <dbReference type="ChEBI" id="CHEBI:132522"/>
        <dbReference type="ChEBI" id="CHEBI:132523"/>
        <dbReference type="EC" id="2.4.1.256"/>
    </reaction>
    <physiologicalReaction direction="left-to-right" evidence="6">
        <dbReference type="Rhea" id="RHEA:29544"/>
    </physiologicalReaction>
</comment>
<comment type="pathway">
    <text evidence="6">Protein modification; protein glycosylation.</text>
</comment>
<comment type="subunit">
    <text evidence="1">Interacts with KCNH1; may regulate KCNH1, possibly by regulating its N-glycosylation. Interacts with KCNH2; may reduce KCNH2 sensitivity to classic proarrhythmic drug blockade, possibly by regulating its N-glycosylation.</text>
</comment>
<comment type="interaction">
    <interactant intactId="EBI-18075734">
        <id>Q5I7T1</id>
    </interactant>
    <interactant intactId="EBI-7797864">
        <id>P11912</id>
        <label>CD79A</label>
    </interactant>
    <organismsDiffer>false</organismsDiffer>
    <experiments>3</experiments>
</comment>
<comment type="interaction">
    <interactant intactId="EBI-18075734">
        <id>Q5I7T1</id>
    </interactant>
    <interactant intactId="EBI-18037857">
        <id>Q3SXP7</id>
        <label>SHISAL1</label>
    </interactant>
    <organismsDiffer>false</organismsDiffer>
    <experiments>3</experiments>
</comment>
<comment type="subcellular location">
    <subcellularLocation>
        <location evidence="6">Endoplasmic reticulum membrane</location>
        <topology evidence="2">Multi-pass membrane protein</topology>
    </subcellularLocation>
    <text evidence="1">Also detected at the plasma membrane.</text>
</comment>
<comment type="tissue specificity">
    <text evidence="3">Highly expressed in heart, placenta, liver, kidney and pancreas. Weakly expressed in lung, skeletal muscle and brain.</text>
</comment>
<comment type="similarity">
    <text evidence="9">Belongs to the ALG10 glucosyltransferase family.</text>
</comment>
<accession>Q5I7T1</accession>
<accession>B2RPF4</accession>
<gene>
    <name evidence="11" type="primary">ALG10B</name>
    <name evidence="8" type="synonym">KCR1</name>
</gene>
<evidence type="ECO:0000250" key="1">
    <source>
        <dbReference type="UniProtKB" id="O88788"/>
    </source>
</evidence>
<evidence type="ECO:0000255" key="2"/>
<evidence type="ECO:0000269" key="3">
    <source>
    </source>
</evidence>
<evidence type="ECO:0000269" key="4">
    <source>
    </source>
</evidence>
<evidence type="ECO:0000269" key="5">
    <source>
    </source>
</evidence>
<evidence type="ECO:0000269" key="6">
    <source>
    </source>
</evidence>
<evidence type="ECO:0000269" key="7">
    <source ref="4"/>
</evidence>
<evidence type="ECO:0000303" key="8">
    <source>
    </source>
</evidence>
<evidence type="ECO:0000305" key="9"/>
<evidence type="ECO:0000305" key="10">
    <source>
    </source>
</evidence>
<evidence type="ECO:0000312" key="11">
    <source>
        <dbReference type="HGNC" id="HGNC:31088"/>
    </source>
</evidence>
<name>AG10B_HUMAN</name>
<organism>
    <name type="scientific">Homo sapiens</name>
    <name type="common">Human</name>
    <dbReference type="NCBI Taxonomy" id="9606"/>
    <lineage>
        <taxon>Eukaryota</taxon>
        <taxon>Metazoa</taxon>
        <taxon>Chordata</taxon>
        <taxon>Craniata</taxon>
        <taxon>Vertebrata</taxon>
        <taxon>Euteleostomi</taxon>
        <taxon>Mammalia</taxon>
        <taxon>Eutheria</taxon>
        <taxon>Euarchontoglires</taxon>
        <taxon>Primates</taxon>
        <taxon>Haplorrhini</taxon>
        <taxon>Catarrhini</taxon>
        <taxon>Hominidae</taxon>
        <taxon>Homo</taxon>
    </lineage>
</organism>
<sequence length="473" mass="55448">MAQLEGYCFSAALSCTFLVSCLLFSAFSRALREPYMDEIFHLPQAQRYCEGHFSLSQWDPMITTLPGLYLVSVGVVKPAIWIFAWSEHVVCSIGMLRFVNLLFSVGNFYLLYLLFHKVQPRNKAASSIQRVLSTLTLAVFPTLYFFNFLYYTEAGSMFFTLFAYLMCLYGNHKTSAFLGFCGFMFRQTNIIWAVFCAGNVIAQKLTEAWKTELQKKEDRLPPIKGPFAEFRKILQFLLAYSMSFKNLSMLFCLTWPYILLGFLFCAFVVVNGGIVIGDRSSHEACLHFPQLFYFFSFTLFFSFPHLLSPSKIKTFLSLVWKHGILFLVVTLVSVFLVWKFTYAHKYLLADNRHYTFYVWKRVFQRYAILKYLLVPAYIFAGWSIADSLKSKPIFWNLMFFICLFIVIVPQKLLEFRYFILPYVIYRLNITLPPTSRLVCELSCYAIVNFITFYIFLNKTFQWPNSQDIQRFMW</sequence>
<dbReference type="EC" id="2.4.1.256" evidence="6"/>
<dbReference type="EMBL" id="AY845858">
    <property type="protein sequence ID" value="AAW31756.1"/>
    <property type="molecule type" value="mRNA"/>
</dbReference>
<dbReference type="EMBL" id="AC117372">
    <property type="status" value="NOT_ANNOTATED_CDS"/>
    <property type="molecule type" value="Genomic_DNA"/>
</dbReference>
<dbReference type="EMBL" id="CH471111">
    <property type="protein sequence ID" value="EAW57795.1"/>
    <property type="molecule type" value="Genomic_DNA"/>
</dbReference>
<dbReference type="EMBL" id="BC137413">
    <property type="protein sequence ID" value="AAI37414.1"/>
    <property type="molecule type" value="mRNA"/>
</dbReference>
<dbReference type="EMBL" id="BC137414">
    <property type="protein sequence ID" value="AAI37415.1"/>
    <property type="molecule type" value="mRNA"/>
</dbReference>
<dbReference type="CCDS" id="CCDS31772.1"/>
<dbReference type="RefSeq" id="NP_001013642.2">
    <property type="nucleotide sequence ID" value="NM_001013620.4"/>
</dbReference>
<dbReference type="BioGRID" id="126840">
    <property type="interactions" value="48"/>
</dbReference>
<dbReference type="FunCoup" id="Q5I7T1">
    <property type="interactions" value="2237"/>
</dbReference>
<dbReference type="IntAct" id="Q5I7T1">
    <property type="interactions" value="7"/>
</dbReference>
<dbReference type="STRING" id="9606.ENSP00000310120"/>
<dbReference type="GlyGen" id="Q5I7T1">
    <property type="glycosylation" value="1 site, 1 O-linked glycan (1 site)"/>
</dbReference>
<dbReference type="iPTMnet" id="Q5I7T1"/>
<dbReference type="PhosphoSitePlus" id="Q5I7T1"/>
<dbReference type="SwissPalm" id="Q5I7T1"/>
<dbReference type="BioMuta" id="ALG10B"/>
<dbReference type="DMDM" id="296434391"/>
<dbReference type="jPOST" id="Q5I7T1"/>
<dbReference type="MassIVE" id="Q5I7T1"/>
<dbReference type="PaxDb" id="9606-ENSP00000310120"/>
<dbReference type="PeptideAtlas" id="Q5I7T1"/>
<dbReference type="ProteomicsDB" id="62974"/>
<dbReference type="Pumba" id="Q5I7T1"/>
<dbReference type="Antibodypedia" id="55463">
    <property type="antibodies" value="74 antibodies from 13 providers"/>
</dbReference>
<dbReference type="DNASU" id="144245"/>
<dbReference type="Ensembl" id="ENST00000308742.9">
    <property type="protein sequence ID" value="ENSP00000310120.4"/>
    <property type="gene ID" value="ENSG00000175548.9"/>
</dbReference>
<dbReference type="GeneID" id="144245"/>
<dbReference type="KEGG" id="hsa:144245"/>
<dbReference type="MANE-Select" id="ENST00000308742.9">
    <property type="protein sequence ID" value="ENSP00000310120.4"/>
    <property type="RefSeq nucleotide sequence ID" value="NM_001013620.4"/>
    <property type="RefSeq protein sequence ID" value="NP_001013642.2"/>
</dbReference>
<dbReference type="UCSC" id="uc001rln.5">
    <property type="organism name" value="human"/>
</dbReference>
<dbReference type="AGR" id="HGNC:31088"/>
<dbReference type="CTD" id="144245"/>
<dbReference type="DisGeNET" id="144245"/>
<dbReference type="GeneCards" id="ALG10B"/>
<dbReference type="HGNC" id="HGNC:31088">
    <property type="gene designation" value="ALG10B"/>
</dbReference>
<dbReference type="HPA" id="ENSG00000175548">
    <property type="expression patterns" value="Low tissue specificity"/>
</dbReference>
<dbReference type="MalaCards" id="ALG10B"/>
<dbReference type="MIM" id="603313">
    <property type="type" value="gene"/>
</dbReference>
<dbReference type="neXtProt" id="NX_Q5I7T1"/>
<dbReference type="OpenTargets" id="ENSG00000175548"/>
<dbReference type="PharmGKB" id="PA134936082"/>
<dbReference type="VEuPathDB" id="HostDB:ENSG00000175548"/>
<dbReference type="eggNOG" id="KOG2642">
    <property type="taxonomic scope" value="Eukaryota"/>
</dbReference>
<dbReference type="GeneTree" id="ENSGT00390000012906"/>
<dbReference type="HOGENOM" id="CLU_017053_1_0_1"/>
<dbReference type="InParanoid" id="Q5I7T1"/>
<dbReference type="OMA" id="FPINWNT"/>
<dbReference type="OrthoDB" id="4769at2759"/>
<dbReference type="PAN-GO" id="Q5I7T1">
    <property type="GO annotations" value="3 GO annotations based on evolutionary models"/>
</dbReference>
<dbReference type="PhylomeDB" id="Q5I7T1"/>
<dbReference type="TreeFam" id="TF300150"/>
<dbReference type="PathwayCommons" id="Q5I7T1"/>
<dbReference type="Reactome" id="R-HSA-446193">
    <property type="pathway name" value="Biosynthesis of the N-glycan precursor (dolichol lipid-linked oligosaccharide, LLO) and transfer to a nascent protein"/>
</dbReference>
<dbReference type="SignaLink" id="Q5I7T1"/>
<dbReference type="UniPathway" id="UPA00378"/>
<dbReference type="BioGRID-ORCS" id="144245">
    <property type="hits" value="116 hits in 1082 CRISPR screens"/>
</dbReference>
<dbReference type="ChiTaRS" id="ALG10B">
    <property type="organism name" value="human"/>
</dbReference>
<dbReference type="GenomeRNAi" id="144245"/>
<dbReference type="Pharos" id="Q5I7T1">
    <property type="development level" value="Tbio"/>
</dbReference>
<dbReference type="PRO" id="PR:Q5I7T1"/>
<dbReference type="Proteomes" id="UP000005640">
    <property type="component" value="Chromosome 12"/>
</dbReference>
<dbReference type="RNAct" id="Q5I7T1">
    <property type="molecule type" value="protein"/>
</dbReference>
<dbReference type="Bgee" id="ENSG00000175548">
    <property type="expression patterns" value="Expressed in calcaneal tendon and 159 other cell types or tissues"/>
</dbReference>
<dbReference type="ExpressionAtlas" id="Q5I7T1">
    <property type="expression patterns" value="baseline and differential"/>
</dbReference>
<dbReference type="GO" id="GO:0005783">
    <property type="term" value="C:endoplasmic reticulum"/>
    <property type="evidence" value="ECO:0000318"/>
    <property type="project" value="GO_Central"/>
</dbReference>
<dbReference type="GO" id="GO:0005789">
    <property type="term" value="C:endoplasmic reticulum membrane"/>
    <property type="evidence" value="ECO:0000316"/>
    <property type="project" value="UniProtKB"/>
</dbReference>
<dbReference type="GO" id="GO:0098553">
    <property type="term" value="C:lumenal side of endoplasmic reticulum membrane"/>
    <property type="evidence" value="ECO:0000305"/>
    <property type="project" value="UniProt"/>
</dbReference>
<dbReference type="GO" id="GO:0005886">
    <property type="term" value="C:plasma membrane"/>
    <property type="evidence" value="ECO:0000314"/>
    <property type="project" value="UniProtKB"/>
</dbReference>
<dbReference type="GO" id="GO:0106073">
    <property type="term" value="F:dolichyl pyrophosphate Glc2Man9GlcNAc2 alpha-1,2-glucosyltransferase activity"/>
    <property type="evidence" value="ECO:0000316"/>
    <property type="project" value="UniProtKB"/>
</dbReference>
<dbReference type="GO" id="GO:0006488">
    <property type="term" value="P:dolichol-linked oligosaccharide biosynthetic process"/>
    <property type="evidence" value="ECO:0000316"/>
    <property type="project" value="UniProtKB"/>
</dbReference>
<dbReference type="GO" id="GO:0006487">
    <property type="term" value="P:protein N-linked glycosylation"/>
    <property type="evidence" value="ECO:0000316"/>
    <property type="project" value="UniProtKB"/>
</dbReference>
<dbReference type="InterPro" id="IPR016900">
    <property type="entry name" value="Alg10"/>
</dbReference>
<dbReference type="PANTHER" id="PTHR12989">
    <property type="entry name" value="ALPHA-1,2-GLUCOSYLTRANSFERASE ALG10"/>
    <property type="match status" value="1"/>
</dbReference>
<dbReference type="PANTHER" id="PTHR12989:SF12">
    <property type="entry name" value="DOL-P-GLC:GLC(2)MAN(9)GLCNAC(2)-PP-DOL ALPHA-1,2-GLUCOSYLTRANSFERASE-RELATED"/>
    <property type="match status" value="1"/>
</dbReference>
<dbReference type="Pfam" id="PF04922">
    <property type="entry name" value="DIE2_ALG10"/>
    <property type="match status" value="1"/>
</dbReference>
<dbReference type="PIRSF" id="PIRSF028810">
    <property type="entry name" value="Alpha1_2_glucosyltferase_Alg10"/>
    <property type="match status" value="1"/>
</dbReference>
<reference key="1">
    <citation type="journal article" date="2003" name="FASEB J.">
        <title>The IKr drug response is modulated by KCR1 in transfected cardiac and noncardiac cell lines.</title>
        <authorList>
            <person name="Kupershmidt S."/>
            <person name="Yang I.C.-H."/>
            <person name="Hayashi K."/>
            <person name="Wei J."/>
            <person name="Chanthaphaychith S."/>
            <person name="Petersen C.I."/>
            <person name="Johns D.C."/>
            <person name="George A.L. Jr."/>
            <person name="Roden D.M."/>
            <person name="Balser J.R."/>
        </authorList>
    </citation>
    <scope>NUCLEOTIDE SEQUENCE [MRNA]</scope>
    <scope>TISSUE SPECIFICITY</scope>
    <scope>VARIANT GLY-84</scope>
</reference>
<reference key="2">
    <citation type="submission" date="2004-12" db="EMBL/GenBank/DDBJ databases">
        <authorList>
            <person name="George A.L. Jr."/>
        </authorList>
    </citation>
    <scope>SEQUENCE REVISION</scope>
</reference>
<reference key="3">
    <citation type="journal article" date="2006" name="Nature">
        <title>The finished DNA sequence of human chromosome 12.</title>
        <authorList>
            <person name="Scherer S.E."/>
            <person name="Muzny D.M."/>
            <person name="Buhay C.J."/>
            <person name="Chen R."/>
            <person name="Cree A."/>
            <person name="Ding Y."/>
            <person name="Dugan-Rocha S."/>
            <person name="Gill R."/>
            <person name="Gunaratne P."/>
            <person name="Harris R.A."/>
            <person name="Hawes A.C."/>
            <person name="Hernandez J."/>
            <person name="Hodgson A.V."/>
            <person name="Hume J."/>
            <person name="Jackson A."/>
            <person name="Khan Z.M."/>
            <person name="Kovar-Smith C."/>
            <person name="Lewis L.R."/>
            <person name="Lozado R.J."/>
            <person name="Metzker M.L."/>
            <person name="Milosavljevic A."/>
            <person name="Miner G.R."/>
            <person name="Montgomery K.T."/>
            <person name="Morgan M.B."/>
            <person name="Nazareth L.V."/>
            <person name="Scott G."/>
            <person name="Sodergren E."/>
            <person name="Song X.-Z."/>
            <person name="Steffen D."/>
            <person name="Lovering R.C."/>
            <person name="Wheeler D.A."/>
            <person name="Worley K.C."/>
            <person name="Yuan Y."/>
            <person name="Zhang Z."/>
            <person name="Adams C.Q."/>
            <person name="Ansari-Lari M.A."/>
            <person name="Ayele M."/>
            <person name="Brown M.J."/>
            <person name="Chen G."/>
            <person name="Chen Z."/>
            <person name="Clerc-Blankenburg K.P."/>
            <person name="Davis C."/>
            <person name="Delgado O."/>
            <person name="Dinh H.H."/>
            <person name="Draper H."/>
            <person name="Gonzalez-Garay M.L."/>
            <person name="Havlak P."/>
            <person name="Jackson L.R."/>
            <person name="Jacob L.S."/>
            <person name="Kelly S.H."/>
            <person name="Li L."/>
            <person name="Li Z."/>
            <person name="Liu J."/>
            <person name="Liu W."/>
            <person name="Lu J."/>
            <person name="Maheshwari M."/>
            <person name="Nguyen B.-V."/>
            <person name="Okwuonu G.O."/>
            <person name="Pasternak S."/>
            <person name="Perez L.M."/>
            <person name="Plopper F.J.H."/>
            <person name="Santibanez J."/>
            <person name="Shen H."/>
            <person name="Tabor P.E."/>
            <person name="Verduzco D."/>
            <person name="Waldron L."/>
            <person name="Wang Q."/>
            <person name="Williams G.A."/>
            <person name="Zhang J."/>
            <person name="Zhou J."/>
            <person name="Allen C.C."/>
            <person name="Amin A.G."/>
            <person name="Anyalebechi V."/>
            <person name="Bailey M."/>
            <person name="Barbaria J.A."/>
            <person name="Bimage K.E."/>
            <person name="Bryant N.P."/>
            <person name="Burch P.E."/>
            <person name="Burkett C.E."/>
            <person name="Burrell K.L."/>
            <person name="Calderon E."/>
            <person name="Cardenas V."/>
            <person name="Carter K."/>
            <person name="Casias K."/>
            <person name="Cavazos I."/>
            <person name="Cavazos S.R."/>
            <person name="Ceasar H."/>
            <person name="Chacko J."/>
            <person name="Chan S.N."/>
            <person name="Chavez D."/>
            <person name="Christopoulos C."/>
            <person name="Chu J."/>
            <person name="Cockrell R."/>
            <person name="Cox C.D."/>
            <person name="Dang M."/>
            <person name="Dathorne S.R."/>
            <person name="David R."/>
            <person name="Davis C.M."/>
            <person name="Davy-Carroll L."/>
            <person name="Deshazo D.R."/>
            <person name="Donlin J.E."/>
            <person name="D'Souza L."/>
            <person name="Eaves K.A."/>
            <person name="Egan A."/>
            <person name="Emery-Cohen A.J."/>
            <person name="Escotto M."/>
            <person name="Flagg N."/>
            <person name="Forbes L.D."/>
            <person name="Gabisi A.M."/>
            <person name="Garza M."/>
            <person name="Hamilton C."/>
            <person name="Henderson N."/>
            <person name="Hernandez O."/>
            <person name="Hines S."/>
            <person name="Hogues M.E."/>
            <person name="Huang M."/>
            <person name="Idlebird D.G."/>
            <person name="Johnson R."/>
            <person name="Jolivet A."/>
            <person name="Jones S."/>
            <person name="Kagan R."/>
            <person name="King L.M."/>
            <person name="Leal B."/>
            <person name="Lebow H."/>
            <person name="Lee S."/>
            <person name="LeVan J.M."/>
            <person name="Lewis L.C."/>
            <person name="London P."/>
            <person name="Lorensuhewa L.M."/>
            <person name="Loulseged H."/>
            <person name="Lovett D.A."/>
            <person name="Lucier A."/>
            <person name="Lucier R.L."/>
            <person name="Ma J."/>
            <person name="Madu R.C."/>
            <person name="Mapua P."/>
            <person name="Martindale A.D."/>
            <person name="Martinez E."/>
            <person name="Massey E."/>
            <person name="Mawhiney S."/>
            <person name="Meador M.G."/>
            <person name="Mendez S."/>
            <person name="Mercado C."/>
            <person name="Mercado I.C."/>
            <person name="Merritt C.E."/>
            <person name="Miner Z.L."/>
            <person name="Minja E."/>
            <person name="Mitchell T."/>
            <person name="Mohabbat F."/>
            <person name="Mohabbat K."/>
            <person name="Montgomery B."/>
            <person name="Moore N."/>
            <person name="Morris S."/>
            <person name="Munidasa M."/>
            <person name="Ngo R.N."/>
            <person name="Nguyen N.B."/>
            <person name="Nickerson E."/>
            <person name="Nwaokelemeh O.O."/>
            <person name="Nwokenkwo S."/>
            <person name="Obregon M."/>
            <person name="Oguh M."/>
            <person name="Oragunye N."/>
            <person name="Oviedo R.J."/>
            <person name="Parish B.J."/>
            <person name="Parker D.N."/>
            <person name="Parrish J."/>
            <person name="Parks K.L."/>
            <person name="Paul H.A."/>
            <person name="Payton B.A."/>
            <person name="Perez A."/>
            <person name="Perrin W."/>
            <person name="Pickens A."/>
            <person name="Primus E.L."/>
            <person name="Pu L.-L."/>
            <person name="Puazo M."/>
            <person name="Quiles M.M."/>
            <person name="Quiroz J.B."/>
            <person name="Rabata D."/>
            <person name="Reeves K."/>
            <person name="Ruiz S.J."/>
            <person name="Shao H."/>
            <person name="Sisson I."/>
            <person name="Sonaike T."/>
            <person name="Sorelle R.P."/>
            <person name="Sutton A.E."/>
            <person name="Svatek A.F."/>
            <person name="Svetz L.A."/>
            <person name="Tamerisa K.S."/>
            <person name="Taylor T.R."/>
            <person name="Teague B."/>
            <person name="Thomas N."/>
            <person name="Thorn R.D."/>
            <person name="Trejos Z.Y."/>
            <person name="Trevino B.K."/>
            <person name="Ukegbu O.N."/>
            <person name="Urban J.B."/>
            <person name="Vasquez L.I."/>
            <person name="Vera V.A."/>
            <person name="Villasana D.M."/>
            <person name="Wang L."/>
            <person name="Ward-Moore S."/>
            <person name="Warren J.T."/>
            <person name="Wei X."/>
            <person name="White F."/>
            <person name="Williamson A.L."/>
            <person name="Wleczyk R."/>
            <person name="Wooden H.S."/>
            <person name="Wooden S.H."/>
            <person name="Yen J."/>
            <person name="Yoon L."/>
            <person name="Yoon V."/>
            <person name="Zorrilla S.E."/>
            <person name="Nelson D."/>
            <person name="Kucherlapati R."/>
            <person name="Weinstock G."/>
            <person name="Gibbs R.A."/>
        </authorList>
    </citation>
    <scope>NUCLEOTIDE SEQUENCE [LARGE SCALE GENOMIC DNA]</scope>
</reference>
<reference key="4">
    <citation type="submission" date="2005-07" db="EMBL/GenBank/DDBJ databases">
        <authorList>
            <person name="Mural R.J."/>
            <person name="Istrail S."/>
            <person name="Sutton G.G."/>
            <person name="Florea L."/>
            <person name="Halpern A.L."/>
            <person name="Mobarry C.M."/>
            <person name="Lippert R."/>
            <person name="Walenz B."/>
            <person name="Shatkay H."/>
            <person name="Dew I."/>
            <person name="Miller J.R."/>
            <person name="Flanigan M.J."/>
            <person name="Edwards N.J."/>
            <person name="Bolanos R."/>
            <person name="Fasulo D."/>
            <person name="Halldorsson B.V."/>
            <person name="Hannenhalli S."/>
            <person name="Turner R."/>
            <person name="Yooseph S."/>
            <person name="Lu F."/>
            <person name="Nusskern D.R."/>
            <person name="Shue B.C."/>
            <person name="Zheng X.H."/>
            <person name="Zhong F."/>
            <person name="Delcher A.L."/>
            <person name="Huson D.H."/>
            <person name="Kravitz S.A."/>
            <person name="Mouchard L."/>
            <person name="Reinert K."/>
            <person name="Remington K.A."/>
            <person name="Clark A.G."/>
            <person name="Waterman M.S."/>
            <person name="Eichler E.E."/>
            <person name="Adams M.D."/>
            <person name="Hunkapiller M.W."/>
            <person name="Myers E.W."/>
            <person name="Venter J.C."/>
        </authorList>
    </citation>
    <scope>NUCLEOTIDE SEQUENCE [LARGE SCALE GENOMIC DNA]</scope>
    <scope>VARIANT GLY-84</scope>
</reference>
<reference key="5">
    <citation type="journal article" date="2004" name="Genome Res.">
        <title>The status, quality, and expansion of the NIH full-length cDNA project: the Mammalian Gene Collection (MGC).</title>
        <authorList>
            <consortium name="The MGC Project Team"/>
        </authorList>
    </citation>
    <scope>NUCLEOTIDE SEQUENCE [LARGE SCALE MRNA]</scope>
    <scope>VARIANT GLY-84</scope>
</reference>
<reference key="6">
    <citation type="journal article" date="2004" name="Proc. Natl. Acad. Sci. U.S.A.">
        <title>In vivo identification of genes that modify ether-a-go-go-related gene activity in Caenorhabditis elegans may also affect human cardiac arrhythmia.</title>
        <authorList>
            <person name="Petersen C.I."/>
            <person name="McFarland T.R."/>
            <person name="Stepanovic S.Z."/>
            <person name="Yang P."/>
            <person name="Reiner D.J."/>
            <person name="Hayashi K."/>
            <person name="George A.L. Jr."/>
            <person name="Roden D.M."/>
            <person name="Thomas J.H."/>
            <person name="Balser J.R."/>
        </authorList>
    </citation>
    <scope>VARIANT VAL-446</scope>
</reference>
<reference key="7">
    <citation type="journal article" date="2011" name="J. Mol. Cell. Cardiol.">
        <title>A KCR1 variant implicated in susceptibility to the long QT syndrome.</title>
        <authorList>
            <person name="Hayashi K."/>
            <person name="Fujino N."/>
            <person name="Ino H."/>
            <person name="Uchiyama K."/>
            <person name="Sakata K."/>
            <person name="Konno T."/>
            <person name="Masuta E."/>
            <person name="Funada A."/>
            <person name="Sakamoto Y."/>
            <person name="Tsubokawa T."/>
            <person name="Hodatsu A."/>
            <person name="Yasuda T."/>
            <person name="Kanaya H."/>
            <person name="Kim M.Y."/>
            <person name="Kupershmidt S."/>
            <person name="Higashida H."/>
            <person name="Yamagishi M."/>
        </authorList>
    </citation>
    <scope>VARIANT ASP-33</scope>
    <scope>CHARACTERIZATION OF VARIANT ASP-33</scope>
    <scope>FUNCTION</scope>
    <scope>CATALYTIC ACTIVITY</scope>
    <scope>PATHWAY</scope>
    <scope>SUBCELLULAR LOCATION</scope>
</reference>
<proteinExistence type="evidence at protein level"/>
<keyword id="KW-0256">Endoplasmic reticulum</keyword>
<keyword id="KW-0328">Glycosyltransferase</keyword>
<keyword id="KW-0472">Membrane</keyword>
<keyword id="KW-1185">Reference proteome</keyword>
<keyword id="KW-0808">Transferase</keyword>
<keyword id="KW-0812">Transmembrane</keyword>
<keyword id="KW-1133">Transmembrane helix</keyword>
<feature type="chain" id="PRO_0000215448" description="Dol-P-Glc:Glc(2)Man(9)GlcNAc(2)-PP-Dol alpha-1,2-glucosyltransferase">
    <location>
        <begin position="1"/>
        <end position="473"/>
    </location>
</feature>
<feature type="topological domain" description="Cytoplasmic" evidence="2">
    <location>
        <begin position="1"/>
        <end position="6"/>
    </location>
</feature>
<feature type="transmembrane region" description="Helical" evidence="2">
    <location>
        <begin position="7"/>
        <end position="27"/>
    </location>
</feature>
<feature type="topological domain" description="Extracellular" evidence="2">
    <location>
        <begin position="28"/>
        <end position="64"/>
    </location>
</feature>
<feature type="transmembrane region" description="Helical" evidence="2">
    <location>
        <begin position="65"/>
        <end position="85"/>
    </location>
</feature>
<feature type="topological domain" description="Cytoplasmic" evidence="2">
    <location>
        <begin position="86"/>
        <end position="97"/>
    </location>
</feature>
<feature type="transmembrane region" description="Helical" evidence="2">
    <location>
        <begin position="98"/>
        <end position="118"/>
    </location>
</feature>
<feature type="topological domain" description="Extracellular" evidence="2">
    <location>
        <begin position="119"/>
        <end position="126"/>
    </location>
</feature>
<feature type="transmembrane region" description="Helical" evidence="2">
    <location>
        <begin position="127"/>
        <end position="147"/>
    </location>
</feature>
<feature type="topological domain" description="Cytoplasmic" evidence="2">
    <location>
        <begin position="148"/>
        <end position="150"/>
    </location>
</feature>
<feature type="transmembrane region" description="Helical" evidence="2">
    <location>
        <begin position="151"/>
        <end position="171"/>
    </location>
</feature>
<feature type="topological domain" description="Extracellular" evidence="2">
    <location>
        <begin position="172"/>
        <end position="175"/>
    </location>
</feature>
<feature type="transmembrane region" description="Helical" evidence="2">
    <location>
        <begin position="176"/>
        <end position="196"/>
    </location>
</feature>
<feature type="topological domain" description="Cytoplasmic" evidence="2">
    <location>
        <begin position="197"/>
        <end position="256"/>
    </location>
</feature>
<feature type="transmembrane region" description="Helical" evidence="2">
    <location>
        <begin position="257"/>
        <end position="277"/>
    </location>
</feature>
<feature type="topological domain" description="Extracellular" evidence="2">
    <location>
        <begin position="278"/>
        <end position="283"/>
    </location>
</feature>
<feature type="transmembrane region" description="Helical" evidence="2">
    <location>
        <begin position="284"/>
        <end position="304"/>
    </location>
</feature>
<feature type="topological domain" description="Cytoplasmic" evidence="2">
    <location>
        <begin position="305"/>
        <end position="317"/>
    </location>
</feature>
<feature type="transmembrane region" description="Helical" evidence="2">
    <location>
        <begin position="318"/>
        <end position="338"/>
    </location>
</feature>
<feature type="topological domain" description="Extracellular" evidence="2">
    <location>
        <begin position="339"/>
        <end position="365"/>
    </location>
</feature>
<feature type="transmembrane region" description="Helical" evidence="2">
    <location>
        <begin position="366"/>
        <end position="386"/>
    </location>
</feature>
<feature type="topological domain" description="Cytoplasmic" evidence="2">
    <location>
        <begin position="387"/>
        <end position="392"/>
    </location>
</feature>
<feature type="transmembrane region" description="Helical" evidence="2">
    <location>
        <begin position="393"/>
        <end position="413"/>
    </location>
</feature>
<feature type="topological domain" description="Extracellular" evidence="2">
    <location>
        <begin position="414"/>
        <end position="436"/>
    </location>
</feature>
<feature type="transmembrane region" description="Helical" evidence="2">
    <location>
        <begin position="437"/>
        <end position="457"/>
    </location>
</feature>
<feature type="topological domain" description="Cytoplasmic" evidence="2">
    <location>
        <begin position="458"/>
        <end position="473"/>
    </location>
</feature>
<feature type="sequence variant" id="VAR_089086" description="Found in a patient with ventricular fibrillation and QT prolongation; uncertain significance; dbSNP:rs188043534." evidence="6">
    <original>E</original>
    <variation>D</variation>
    <location>
        <position position="33"/>
    </location>
</feature>
<feature type="sequence variant" id="VAR_048217" description="In dbSNP:rs6582584." evidence="3 5 7">
    <original>A</original>
    <variation>G</variation>
    <location>
        <position position="84"/>
    </location>
</feature>
<feature type="sequence variant" id="VAR_061002" description="In dbSNP:rs57963306.">
    <original>S</original>
    <variation>N</variation>
    <location>
        <position position="383"/>
    </location>
</feature>
<feature type="sequence variant" id="VAR_023753" description="In dbSNP:rs61730283." evidence="4">
    <original>I</original>
    <variation>V</variation>
    <location>
        <position position="446"/>
    </location>
</feature>